<proteinExistence type="inferred from homology"/>
<feature type="chain" id="PRO_1000073300" description="Large ribosomal subunit protein bL25">
    <location>
        <begin position="1"/>
        <end position="95"/>
    </location>
</feature>
<keyword id="KW-1185">Reference proteome</keyword>
<keyword id="KW-0687">Ribonucleoprotein</keyword>
<keyword id="KW-0689">Ribosomal protein</keyword>
<keyword id="KW-0694">RNA-binding</keyword>
<keyword id="KW-0699">rRNA-binding</keyword>
<comment type="function">
    <text evidence="1">This is one of the proteins that binds to the 5S RNA in the ribosome where it forms part of the central protuberance.</text>
</comment>
<comment type="subunit">
    <text evidence="1">Part of the 50S ribosomal subunit; part of the 5S rRNA/L5/L18/L25 subcomplex. Contacts the 5S rRNA. Binds to the 5S rRNA independently of L5 and L18.</text>
</comment>
<comment type="similarity">
    <text evidence="1">Belongs to the bacterial ribosomal protein bL25 family.</text>
</comment>
<organism>
    <name type="scientific">Actinobacillus succinogenes (strain ATCC 55618 / DSM 22257 / CCUG 43843 / 130Z)</name>
    <dbReference type="NCBI Taxonomy" id="339671"/>
    <lineage>
        <taxon>Bacteria</taxon>
        <taxon>Pseudomonadati</taxon>
        <taxon>Pseudomonadota</taxon>
        <taxon>Gammaproteobacteria</taxon>
        <taxon>Pasteurellales</taxon>
        <taxon>Pasteurellaceae</taxon>
        <taxon>Actinobacillus</taxon>
    </lineage>
</organism>
<accession>A6VQ17</accession>
<name>RL25_ACTSZ</name>
<gene>
    <name evidence="1" type="primary">rplY</name>
    <name type="ordered locus">Asuc_1712</name>
</gene>
<sequence>MAFKFNAEVRTAQGKGASRRLRHNGQIPAIVYGGSEAPVSIVLNHDELNNAQVHDSFYSDVITLVIDGKEVAVKVQAMQRHPFKPKLVHIDFKRA</sequence>
<dbReference type="EMBL" id="CP000746">
    <property type="protein sequence ID" value="ABR75064.1"/>
    <property type="molecule type" value="Genomic_DNA"/>
</dbReference>
<dbReference type="RefSeq" id="WP_012073441.1">
    <property type="nucleotide sequence ID" value="NC_009655.1"/>
</dbReference>
<dbReference type="SMR" id="A6VQ17"/>
<dbReference type="STRING" id="339671.Asuc_1712"/>
<dbReference type="KEGG" id="asu:Asuc_1712"/>
<dbReference type="eggNOG" id="COG1825">
    <property type="taxonomic scope" value="Bacteria"/>
</dbReference>
<dbReference type="HOGENOM" id="CLU_137946_0_0_6"/>
<dbReference type="OrthoDB" id="9806411at2"/>
<dbReference type="Proteomes" id="UP000001114">
    <property type="component" value="Chromosome"/>
</dbReference>
<dbReference type="GO" id="GO:0022625">
    <property type="term" value="C:cytosolic large ribosomal subunit"/>
    <property type="evidence" value="ECO:0007669"/>
    <property type="project" value="TreeGrafter"/>
</dbReference>
<dbReference type="GO" id="GO:0008097">
    <property type="term" value="F:5S rRNA binding"/>
    <property type="evidence" value="ECO:0007669"/>
    <property type="project" value="InterPro"/>
</dbReference>
<dbReference type="GO" id="GO:0003735">
    <property type="term" value="F:structural constituent of ribosome"/>
    <property type="evidence" value="ECO:0007669"/>
    <property type="project" value="InterPro"/>
</dbReference>
<dbReference type="GO" id="GO:0006412">
    <property type="term" value="P:translation"/>
    <property type="evidence" value="ECO:0007669"/>
    <property type="project" value="UniProtKB-UniRule"/>
</dbReference>
<dbReference type="CDD" id="cd00495">
    <property type="entry name" value="Ribosomal_L25_TL5_CTC"/>
    <property type="match status" value="1"/>
</dbReference>
<dbReference type="FunFam" id="2.40.240.10:FF:000002">
    <property type="entry name" value="50S ribosomal protein L25"/>
    <property type="match status" value="1"/>
</dbReference>
<dbReference type="Gene3D" id="2.40.240.10">
    <property type="entry name" value="Ribosomal Protein L25, Chain P"/>
    <property type="match status" value="1"/>
</dbReference>
<dbReference type="HAMAP" id="MF_01336">
    <property type="entry name" value="Ribosomal_bL25"/>
    <property type="match status" value="1"/>
</dbReference>
<dbReference type="InterPro" id="IPR020056">
    <property type="entry name" value="Rbsml_bL25/Gln-tRNA_synth_N"/>
</dbReference>
<dbReference type="InterPro" id="IPR011035">
    <property type="entry name" value="Ribosomal_bL25/Gln-tRNA_synth"/>
</dbReference>
<dbReference type="InterPro" id="IPR020055">
    <property type="entry name" value="Ribosomal_bL25_short"/>
</dbReference>
<dbReference type="InterPro" id="IPR029751">
    <property type="entry name" value="Ribosomal_L25_dom"/>
</dbReference>
<dbReference type="InterPro" id="IPR020930">
    <property type="entry name" value="Ribosomal_uL5_bac-type"/>
</dbReference>
<dbReference type="NCBIfam" id="NF004612">
    <property type="entry name" value="PRK05943.1"/>
    <property type="match status" value="1"/>
</dbReference>
<dbReference type="PANTHER" id="PTHR33284">
    <property type="entry name" value="RIBOSOMAL PROTEIN L25/GLN-TRNA SYNTHETASE, ANTI-CODON-BINDING DOMAIN-CONTAINING PROTEIN"/>
    <property type="match status" value="1"/>
</dbReference>
<dbReference type="PANTHER" id="PTHR33284:SF1">
    <property type="entry name" value="RIBOSOMAL PROTEIN L25_GLN-TRNA SYNTHETASE, ANTI-CODON-BINDING DOMAIN-CONTAINING PROTEIN"/>
    <property type="match status" value="1"/>
</dbReference>
<dbReference type="Pfam" id="PF01386">
    <property type="entry name" value="Ribosomal_L25p"/>
    <property type="match status" value="1"/>
</dbReference>
<dbReference type="SUPFAM" id="SSF50715">
    <property type="entry name" value="Ribosomal protein L25-like"/>
    <property type="match status" value="1"/>
</dbReference>
<evidence type="ECO:0000255" key="1">
    <source>
        <dbReference type="HAMAP-Rule" id="MF_01336"/>
    </source>
</evidence>
<evidence type="ECO:0000305" key="2"/>
<protein>
    <recommendedName>
        <fullName evidence="1">Large ribosomal subunit protein bL25</fullName>
    </recommendedName>
    <alternativeName>
        <fullName evidence="2">50S ribosomal protein L25</fullName>
    </alternativeName>
</protein>
<reference key="1">
    <citation type="journal article" date="2010" name="BMC Genomics">
        <title>A genomic perspective on the potential of Actinobacillus succinogenes for industrial succinate production.</title>
        <authorList>
            <person name="McKinlay J.B."/>
            <person name="Laivenieks M."/>
            <person name="Schindler B.D."/>
            <person name="McKinlay A.A."/>
            <person name="Siddaramappa S."/>
            <person name="Challacombe J.F."/>
            <person name="Lowry S.R."/>
            <person name="Clum A."/>
            <person name="Lapidus A.L."/>
            <person name="Burkhart K.B."/>
            <person name="Harkins V."/>
            <person name="Vieille C."/>
        </authorList>
    </citation>
    <scope>NUCLEOTIDE SEQUENCE [LARGE SCALE GENOMIC DNA]</scope>
    <source>
        <strain>ATCC 55618 / DSM 22257 / CCUG 43843 / 130Z</strain>
    </source>
</reference>